<dbReference type="EMBL" id="Z29117">
    <property type="protein sequence ID" value="CAA82374.1"/>
    <property type="molecule type" value="Genomic_DNA"/>
</dbReference>
<dbReference type="PIR" id="S40720">
    <property type="entry name" value="S40720"/>
</dbReference>
<dbReference type="RefSeq" id="NP_499118.1">
    <property type="nucleotide sequence ID" value="NM_066717.2"/>
</dbReference>
<dbReference type="SMR" id="P34357"/>
<dbReference type="FunCoup" id="P34357">
    <property type="interactions" value="153"/>
</dbReference>
<dbReference type="PaxDb" id="6239-C48B4.3.2"/>
<dbReference type="EnsemblMetazoa" id="C48B4.3.1">
    <property type="protein sequence ID" value="C48B4.3.1"/>
    <property type="gene ID" value="WBGene00008168"/>
</dbReference>
<dbReference type="GeneID" id="183565"/>
<dbReference type="KEGG" id="cel:CELE_C48B4.3"/>
<dbReference type="UCSC" id="C48B4.3">
    <property type="organism name" value="c. elegans"/>
</dbReference>
<dbReference type="AGR" id="WB:WBGene00008168"/>
<dbReference type="CTD" id="183565"/>
<dbReference type="WormBase" id="C48B4.3">
    <property type="protein sequence ID" value="CE00490"/>
    <property type="gene ID" value="WBGene00008168"/>
</dbReference>
<dbReference type="eggNOG" id="ENOG502TGT5">
    <property type="taxonomic scope" value="Eukaryota"/>
</dbReference>
<dbReference type="HOGENOM" id="CLU_1284339_0_0_1"/>
<dbReference type="InParanoid" id="P34357"/>
<dbReference type="OMA" id="TKAYEMM"/>
<dbReference type="OrthoDB" id="5833104at2759"/>
<dbReference type="PRO" id="PR:P34357"/>
<dbReference type="Proteomes" id="UP000001940">
    <property type="component" value="Chromosome III"/>
</dbReference>
<dbReference type="Bgee" id="WBGene00008168">
    <property type="expression patterns" value="Expressed in pharyngeal muscle cell (C elegans) and 3 other cell types or tissues"/>
</dbReference>
<keyword id="KW-1185">Reference proteome</keyword>
<name>YLH3_CAEEL</name>
<reference key="1">
    <citation type="journal article" date="1994" name="Nature">
        <title>2.2 Mb of contiguous nucleotide sequence from chromosome III of C. elegans.</title>
        <authorList>
            <person name="Wilson R."/>
            <person name="Ainscough R."/>
            <person name="Anderson K."/>
            <person name="Baynes C."/>
            <person name="Berks M."/>
            <person name="Bonfield J."/>
            <person name="Burton J."/>
            <person name="Connell M."/>
            <person name="Copsey T."/>
            <person name="Cooper J."/>
            <person name="Coulson A."/>
            <person name="Craxton M."/>
            <person name="Dear S."/>
            <person name="Du Z."/>
            <person name="Durbin R."/>
            <person name="Favello A."/>
            <person name="Fraser A."/>
            <person name="Fulton L."/>
            <person name="Gardner A."/>
            <person name="Green P."/>
            <person name="Hawkins T."/>
            <person name="Hillier L."/>
            <person name="Jier M."/>
            <person name="Johnston L."/>
            <person name="Jones M."/>
            <person name="Kershaw J."/>
            <person name="Kirsten J."/>
            <person name="Laisster N."/>
            <person name="Latreille P."/>
            <person name="Lightning J."/>
            <person name="Lloyd C."/>
            <person name="Mortimore B."/>
            <person name="O'Callaghan M."/>
            <person name="Parsons J."/>
            <person name="Percy C."/>
            <person name="Rifken L."/>
            <person name="Roopra A."/>
            <person name="Saunders D."/>
            <person name="Shownkeen R."/>
            <person name="Sims M."/>
            <person name="Smaldon N."/>
            <person name="Smith A."/>
            <person name="Smith M."/>
            <person name="Sonnhammer E."/>
            <person name="Staden R."/>
            <person name="Sulston J."/>
            <person name="Thierry-Mieg J."/>
            <person name="Thomas K."/>
            <person name="Vaudin M."/>
            <person name="Vaughan K."/>
            <person name="Waterston R."/>
            <person name="Watson A."/>
            <person name="Weinstock L."/>
            <person name="Wilkinson-Sproat J."/>
            <person name="Wohldman P."/>
        </authorList>
    </citation>
    <scope>NUCLEOTIDE SEQUENCE [LARGE SCALE GENOMIC DNA]</scope>
    <source>
        <strain>Bristol N2</strain>
    </source>
</reference>
<reference key="2">
    <citation type="journal article" date="1998" name="Science">
        <title>Genome sequence of the nematode C. elegans: a platform for investigating biology.</title>
        <authorList>
            <consortium name="The C. elegans sequencing consortium"/>
        </authorList>
    </citation>
    <scope>NUCLEOTIDE SEQUENCE [LARGE SCALE GENOMIC DNA]</scope>
    <source>
        <strain>Bristol N2</strain>
    </source>
</reference>
<accession>P34357</accession>
<protein>
    <recommendedName>
        <fullName>Uncharacterized protein C48B4.3</fullName>
    </recommendedName>
</protein>
<organism>
    <name type="scientific">Caenorhabditis elegans</name>
    <dbReference type="NCBI Taxonomy" id="6239"/>
    <lineage>
        <taxon>Eukaryota</taxon>
        <taxon>Metazoa</taxon>
        <taxon>Ecdysozoa</taxon>
        <taxon>Nematoda</taxon>
        <taxon>Chromadorea</taxon>
        <taxon>Rhabditida</taxon>
        <taxon>Rhabditina</taxon>
        <taxon>Rhabditomorpha</taxon>
        <taxon>Rhabditoidea</taxon>
        <taxon>Rhabditidae</taxon>
        <taxon>Peloderinae</taxon>
        <taxon>Caenorhabditis</taxon>
    </lineage>
</organism>
<sequence>MDEVANALAVSQTMMEKMQKLEISKNYDVEKFETLLRLPARDVNTFMEKEAKKTDDEKMTDMDRRIKRIREDKTDRAARTLQKYFRKIRVKGEQNHINKRISKIPAKRRVVLLEQIRQKMGEQQPIRRFGGYQVIRAVELHKGKQKLQKDWLAKLSIDVNFHDKNLSRPNSPTHFIANSIPTLIRKKAEMKHAEKMQEIDSSIMDIYCGFQKDNLH</sequence>
<proteinExistence type="predicted"/>
<gene>
    <name type="ORF">C48B4.3</name>
</gene>
<feature type="chain" id="PRO_0000065246" description="Uncharacterized protein C48B4.3">
    <location>
        <begin position="1"/>
        <end position="216"/>
    </location>
</feature>